<evidence type="ECO:0000255" key="1">
    <source>
        <dbReference type="HAMAP-Rule" id="MF_00568"/>
    </source>
</evidence>
<reference key="1">
    <citation type="journal article" date="2015" name="Microbiology">
        <title>Genome of Methanoregula boonei 6A8 reveals adaptations to oligotrophic peatland environments.</title>
        <authorList>
            <person name="Braeuer S."/>
            <person name="Cadillo-Quiroz H."/>
            <person name="Kyrpides N."/>
            <person name="Woyke T."/>
            <person name="Goodwin L."/>
            <person name="Detter C."/>
            <person name="Podell S."/>
            <person name="Yavitt J.B."/>
            <person name="Zinder S.H."/>
        </authorList>
    </citation>
    <scope>NUCLEOTIDE SEQUENCE [LARGE SCALE GENOMIC DNA]</scope>
    <source>
        <strain>DSM 21154 / JCM 14090 / 6A8</strain>
    </source>
</reference>
<name>NADA_METB6</name>
<accession>A7IA72</accession>
<sequence length="302" mass="32791">MDDTALLQEEILRLKEKKNAILLAHNYQRPEVQDIADLTGDSLELARAAAAMQGDTIVFCGVDFMAETAAILAPDKTVLLPAADACCPMAEMVTAEELRFARARHPGAAVVCYVNTTAGVKAESDICCTSANAISVVNSLTEDRVIFVPDKNLGRYAARFTEKKVLPWEGFCLVHDRYTPDDVARAKDAHPGAAVVVHPECRPEVIDLADHVASTSGIIRYVQTSPGSEFIIGTEIGILHRLSKECPGKRCFPLSDKAVCVNMKKTTLVHVRDALVTGQPRITVPDEIASRARRAIGRMLAL</sequence>
<dbReference type="EC" id="2.5.1.72" evidence="1"/>
<dbReference type="EMBL" id="CP000780">
    <property type="protein sequence ID" value="ABS56633.1"/>
    <property type="molecule type" value="Genomic_DNA"/>
</dbReference>
<dbReference type="RefSeq" id="WP_012107691.1">
    <property type="nucleotide sequence ID" value="NC_009712.1"/>
</dbReference>
<dbReference type="SMR" id="A7IA72"/>
<dbReference type="STRING" id="456442.Mboo_2119"/>
<dbReference type="GeneID" id="5411217"/>
<dbReference type="KEGG" id="mbn:Mboo_2119"/>
<dbReference type="eggNOG" id="arCOG04459">
    <property type="taxonomic scope" value="Archaea"/>
</dbReference>
<dbReference type="HOGENOM" id="CLU_047382_0_0_2"/>
<dbReference type="OrthoDB" id="5931at2157"/>
<dbReference type="UniPathway" id="UPA00253">
    <property type="reaction ID" value="UER00327"/>
</dbReference>
<dbReference type="Proteomes" id="UP000002408">
    <property type="component" value="Chromosome"/>
</dbReference>
<dbReference type="GO" id="GO:0005737">
    <property type="term" value="C:cytoplasm"/>
    <property type="evidence" value="ECO:0007669"/>
    <property type="project" value="UniProtKB-SubCell"/>
</dbReference>
<dbReference type="GO" id="GO:0051539">
    <property type="term" value="F:4 iron, 4 sulfur cluster binding"/>
    <property type="evidence" value="ECO:0007669"/>
    <property type="project" value="UniProtKB-KW"/>
</dbReference>
<dbReference type="GO" id="GO:0046872">
    <property type="term" value="F:metal ion binding"/>
    <property type="evidence" value="ECO:0007669"/>
    <property type="project" value="UniProtKB-KW"/>
</dbReference>
<dbReference type="GO" id="GO:0008987">
    <property type="term" value="F:quinolinate synthetase A activity"/>
    <property type="evidence" value="ECO:0007669"/>
    <property type="project" value="UniProtKB-UniRule"/>
</dbReference>
<dbReference type="GO" id="GO:0034628">
    <property type="term" value="P:'de novo' NAD biosynthetic process from L-aspartate"/>
    <property type="evidence" value="ECO:0007669"/>
    <property type="project" value="TreeGrafter"/>
</dbReference>
<dbReference type="FunFam" id="3.40.50.10800:FF:000001">
    <property type="entry name" value="Quinolinate synthase A"/>
    <property type="match status" value="1"/>
</dbReference>
<dbReference type="Gene3D" id="3.40.50.10800">
    <property type="entry name" value="NadA-like"/>
    <property type="match status" value="3"/>
</dbReference>
<dbReference type="HAMAP" id="MF_00568">
    <property type="entry name" value="NadA_type2"/>
    <property type="match status" value="1"/>
</dbReference>
<dbReference type="InterPro" id="IPR003473">
    <property type="entry name" value="NadA"/>
</dbReference>
<dbReference type="InterPro" id="IPR036094">
    <property type="entry name" value="NadA_sf"/>
</dbReference>
<dbReference type="InterPro" id="IPR023066">
    <property type="entry name" value="Quinolinate_synth_type2"/>
</dbReference>
<dbReference type="NCBIfam" id="TIGR00550">
    <property type="entry name" value="nadA"/>
    <property type="match status" value="1"/>
</dbReference>
<dbReference type="NCBIfam" id="NF006878">
    <property type="entry name" value="PRK09375.1-2"/>
    <property type="match status" value="1"/>
</dbReference>
<dbReference type="NCBIfam" id="NF006879">
    <property type="entry name" value="PRK09375.1-4"/>
    <property type="match status" value="1"/>
</dbReference>
<dbReference type="PANTHER" id="PTHR30573:SF0">
    <property type="entry name" value="QUINOLINATE SYNTHASE, CHLOROPLASTIC"/>
    <property type="match status" value="1"/>
</dbReference>
<dbReference type="PANTHER" id="PTHR30573">
    <property type="entry name" value="QUINOLINATE SYNTHETASE A"/>
    <property type="match status" value="1"/>
</dbReference>
<dbReference type="Pfam" id="PF02445">
    <property type="entry name" value="NadA"/>
    <property type="match status" value="1"/>
</dbReference>
<dbReference type="SUPFAM" id="SSF142754">
    <property type="entry name" value="NadA-like"/>
    <property type="match status" value="1"/>
</dbReference>
<gene>
    <name evidence="1" type="primary">nadA</name>
    <name type="ordered locus">Mboo_2119</name>
</gene>
<protein>
    <recommendedName>
        <fullName evidence="1">Quinolinate synthase</fullName>
        <ecNumber evidence="1">2.5.1.72</ecNumber>
    </recommendedName>
</protein>
<comment type="function">
    <text evidence="1">Catalyzes the condensation of iminoaspartate with dihydroxyacetone phosphate to form quinolinate.</text>
</comment>
<comment type="catalytic activity">
    <reaction evidence="1">
        <text>iminosuccinate + dihydroxyacetone phosphate = quinolinate + phosphate + 2 H2O + H(+)</text>
        <dbReference type="Rhea" id="RHEA:25888"/>
        <dbReference type="ChEBI" id="CHEBI:15377"/>
        <dbReference type="ChEBI" id="CHEBI:15378"/>
        <dbReference type="ChEBI" id="CHEBI:29959"/>
        <dbReference type="ChEBI" id="CHEBI:43474"/>
        <dbReference type="ChEBI" id="CHEBI:57642"/>
        <dbReference type="ChEBI" id="CHEBI:77875"/>
        <dbReference type="EC" id="2.5.1.72"/>
    </reaction>
    <physiologicalReaction direction="left-to-right" evidence="1">
        <dbReference type="Rhea" id="RHEA:25889"/>
    </physiologicalReaction>
</comment>
<comment type="cofactor">
    <cofactor evidence="1">
        <name>[4Fe-4S] cluster</name>
        <dbReference type="ChEBI" id="CHEBI:49883"/>
    </cofactor>
    <text evidence="1">Binds 1 [4Fe-4S] cluster per subunit.</text>
</comment>
<comment type="pathway">
    <text evidence="1">Cofactor biosynthesis; NAD(+) biosynthesis; quinolinate from iminoaspartate: step 1/1.</text>
</comment>
<comment type="subcellular location">
    <subcellularLocation>
        <location evidence="1">Cytoplasm</location>
    </subcellularLocation>
</comment>
<comment type="similarity">
    <text evidence="1">Belongs to the quinolinate synthase family. Type 2 subfamily.</text>
</comment>
<organism>
    <name type="scientific">Methanoregula boonei (strain DSM 21154 / JCM 14090 / 6A8)</name>
    <dbReference type="NCBI Taxonomy" id="456442"/>
    <lineage>
        <taxon>Archaea</taxon>
        <taxon>Methanobacteriati</taxon>
        <taxon>Methanobacteriota</taxon>
        <taxon>Stenosarchaea group</taxon>
        <taxon>Methanomicrobia</taxon>
        <taxon>Methanomicrobiales</taxon>
        <taxon>Methanoregulaceae</taxon>
        <taxon>Methanoregula</taxon>
    </lineage>
</organism>
<feature type="chain" id="PRO_1000146814" description="Quinolinate synthase">
    <location>
        <begin position="1"/>
        <end position="302"/>
    </location>
</feature>
<feature type="binding site" evidence="1">
    <location>
        <position position="25"/>
    </location>
    <ligand>
        <name>iminosuccinate</name>
        <dbReference type="ChEBI" id="CHEBI:77875"/>
    </ligand>
</feature>
<feature type="binding site" evidence="1">
    <location>
        <position position="42"/>
    </location>
    <ligand>
        <name>iminosuccinate</name>
        <dbReference type="ChEBI" id="CHEBI:77875"/>
    </ligand>
</feature>
<feature type="binding site" evidence="1">
    <location>
        <position position="87"/>
    </location>
    <ligand>
        <name>[4Fe-4S] cluster</name>
        <dbReference type="ChEBI" id="CHEBI:49883"/>
    </ligand>
</feature>
<feature type="binding site" evidence="1">
    <location>
        <begin position="113"/>
        <end position="115"/>
    </location>
    <ligand>
        <name>iminosuccinate</name>
        <dbReference type="ChEBI" id="CHEBI:77875"/>
    </ligand>
</feature>
<feature type="binding site" evidence="1">
    <location>
        <position position="130"/>
    </location>
    <ligand>
        <name>iminosuccinate</name>
        <dbReference type="ChEBI" id="CHEBI:77875"/>
    </ligand>
</feature>
<feature type="binding site" evidence="1">
    <location>
        <position position="172"/>
    </location>
    <ligand>
        <name>[4Fe-4S] cluster</name>
        <dbReference type="ChEBI" id="CHEBI:49883"/>
    </ligand>
</feature>
<feature type="binding site" evidence="1">
    <location>
        <begin position="198"/>
        <end position="200"/>
    </location>
    <ligand>
        <name>iminosuccinate</name>
        <dbReference type="ChEBI" id="CHEBI:77875"/>
    </ligand>
</feature>
<feature type="binding site" evidence="1">
    <location>
        <position position="215"/>
    </location>
    <ligand>
        <name>iminosuccinate</name>
        <dbReference type="ChEBI" id="CHEBI:77875"/>
    </ligand>
</feature>
<feature type="binding site" evidence="1">
    <location>
        <position position="260"/>
    </location>
    <ligand>
        <name>[4Fe-4S] cluster</name>
        <dbReference type="ChEBI" id="CHEBI:49883"/>
    </ligand>
</feature>
<proteinExistence type="inferred from homology"/>
<keyword id="KW-0004">4Fe-4S</keyword>
<keyword id="KW-0963">Cytoplasm</keyword>
<keyword id="KW-0408">Iron</keyword>
<keyword id="KW-0411">Iron-sulfur</keyword>
<keyword id="KW-0479">Metal-binding</keyword>
<keyword id="KW-0662">Pyridine nucleotide biosynthesis</keyword>
<keyword id="KW-1185">Reference proteome</keyword>
<keyword id="KW-0808">Transferase</keyword>